<dbReference type="SMR" id="P84771"/>
<dbReference type="GO" id="GO:0005576">
    <property type="term" value="C:extracellular region"/>
    <property type="evidence" value="ECO:0007669"/>
    <property type="project" value="UniProtKB-SubCell"/>
</dbReference>
<dbReference type="GO" id="GO:0043005">
    <property type="term" value="C:neuron projection"/>
    <property type="evidence" value="ECO:0007669"/>
    <property type="project" value="TreeGrafter"/>
</dbReference>
<dbReference type="GO" id="GO:0005184">
    <property type="term" value="F:neuropeptide hormone activity"/>
    <property type="evidence" value="ECO:0000250"/>
    <property type="project" value="UniProtKB"/>
</dbReference>
<dbReference type="GO" id="GO:0051428">
    <property type="term" value="F:peptide hormone receptor binding"/>
    <property type="evidence" value="ECO:0007669"/>
    <property type="project" value="TreeGrafter"/>
</dbReference>
<dbReference type="GO" id="GO:0031891">
    <property type="term" value="F:type 1 vasoactive intestinal polypeptide receptor binding"/>
    <property type="evidence" value="ECO:0000250"/>
    <property type="project" value="UniProtKB"/>
</dbReference>
<dbReference type="GO" id="GO:0007189">
    <property type="term" value="P:adenylate cyclase-activating G protein-coupled receptor signaling pathway"/>
    <property type="evidence" value="ECO:0000250"/>
    <property type="project" value="UniProtKB"/>
</dbReference>
<dbReference type="GO" id="GO:0048242">
    <property type="term" value="P:epinephrine secretion"/>
    <property type="evidence" value="ECO:0007669"/>
    <property type="project" value="TreeGrafter"/>
</dbReference>
<dbReference type="GO" id="GO:0048255">
    <property type="term" value="P:mRNA stabilization"/>
    <property type="evidence" value="ECO:0000250"/>
    <property type="project" value="AgBase"/>
</dbReference>
<dbReference type="GO" id="GO:0070459">
    <property type="term" value="P:prolactin secretion"/>
    <property type="evidence" value="ECO:0000250"/>
    <property type="project" value="AgBase"/>
</dbReference>
<dbReference type="GO" id="GO:0032880">
    <property type="term" value="P:regulation of protein localization"/>
    <property type="evidence" value="ECO:0007669"/>
    <property type="project" value="TreeGrafter"/>
</dbReference>
<dbReference type="Gene3D" id="6.10.250.590">
    <property type="match status" value="1"/>
</dbReference>
<dbReference type="InterPro" id="IPR000532">
    <property type="entry name" value="Glucagon_GIP_secretin_VIP"/>
</dbReference>
<dbReference type="InterPro" id="IPR046963">
    <property type="entry name" value="VIP/GHRH-like"/>
</dbReference>
<dbReference type="PANTHER" id="PTHR11213">
    <property type="entry name" value="GLUCAGON-FAMILY NEUROPEPTIDE"/>
    <property type="match status" value="1"/>
</dbReference>
<dbReference type="PANTHER" id="PTHR11213:SF5">
    <property type="entry name" value="VIP PEPTIDES"/>
    <property type="match status" value="1"/>
</dbReference>
<dbReference type="Pfam" id="PF00123">
    <property type="entry name" value="Hormone_2"/>
    <property type="match status" value="1"/>
</dbReference>
<dbReference type="PRINTS" id="PR00275">
    <property type="entry name" value="GLUCAGON"/>
</dbReference>
<dbReference type="SMART" id="SM00070">
    <property type="entry name" value="GLUCA"/>
    <property type="match status" value="1"/>
</dbReference>
<dbReference type="PROSITE" id="PS00260">
    <property type="entry name" value="GLUCAGON"/>
    <property type="match status" value="1"/>
</dbReference>
<sequence length="28" mass="3334">HSDAIFTDNYSRFRKQMAVKKYLNSVLT</sequence>
<comment type="function">
    <molecule>Vasoactive intestinal peptide</molecule>
    <text evidence="1">VIP is a neuropeptide involved in a diverse array of physiological processes through activating the PACAP subfamily of class B1 G protein-coupled receptors: VIP receptor 1 (VPR1) and VIP receptor 2 (VPR2). Abundantly expressed throughout the CNS and peripheral nervous systems where they primarily exert neuroprotective and immune modulatory roles. Also causes vasodilation, lowers arterial blood pressure, stimulates myocardial contractility, increases glycogenolysis and relaxes the smooth muscle of trachea, stomach and gall bladder.</text>
</comment>
<comment type="subcellular location">
    <subcellularLocation>
        <location>Secreted</location>
    </subcellularLocation>
</comment>
<comment type="similarity">
    <text evidence="3">Belongs to the glucagon family.</text>
</comment>
<reference evidence="5" key="1">
    <citation type="journal article" date="1995" name="Gen. Comp. Endocrinol.">
        <title>Purification and structural characterization of vasoactive intestinal polypeptide from the trout and bowfin.</title>
        <authorList>
            <person name="Wang Y."/>
            <person name="Conlon J.M."/>
        </authorList>
    </citation>
    <scope>PROTEIN SEQUENCE</scope>
    <source>
        <tissue evidence="4">Stomach</tissue>
    </source>
</reference>
<organism>
    <name type="scientific">Amia calva</name>
    <name type="common">Bowfin</name>
    <dbReference type="NCBI Taxonomy" id="7924"/>
    <lineage>
        <taxon>Eukaryota</taxon>
        <taxon>Metazoa</taxon>
        <taxon>Chordata</taxon>
        <taxon>Craniata</taxon>
        <taxon>Vertebrata</taxon>
        <taxon>Euteleostomi</taxon>
        <taxon>Actinopterygii</taxon>
        <taxon>Neopterygii</taxon>
        <taxon>Holostei</taxon>
        <taxon>Amiiformes</taxon>
        <taxon>Amiidae</taxon>
        <taxon>Amia</taxon>
    </lineage>
</organism>
<evidence type="ECO:0000250" key="1">
    <source>
        <dbReference type="UniProtKB" id="P01282"/>
    </source>
</evidence>
<evidence type="ECO:0000250" key="2">
    <source>
        <dbReference type="UniProtKB" id="P48142"/>
    </source>
</evidence>
<evidence type="ECO:0000255" key="3"/>
<evidence type="ECO:0000269" key="4">
    <source>
    </source>
</evidence>
<evidence type="ECO:0000305" key="5"/>
<feature type="peptide" id="PRO_0000223495" description="Vasoactive intestinal peptide">
    <location>
        <begin position="1"/>
        <end position="28"/>
    </location>
</feature>
<feature type="modified residue" description="Threonine amide" evidence="2">
    <location>
        <position position="28"/>
    </location>
</feature>
<name>VIP_AMICA</name>
<accession>P84771</accession>
<accession>Q9PRI9</accession>
<proteinExistence type="evidence at protein level"/>
<protein>
    <recommendedName>
        <fullName>Vasoactive intestinal peptide</fullName>
        <shortName>VIP</shortName>
    </recommendedName>
    <alternativeName>
        <fullName>Vasoactive intestinal polypeptide</fullName>
    </alternativeName>
</protein>
<gene>
    <name type="primary">vip</name>
</gene>
<keyword id="KW-0027">Amidation</keyword>
<keyword id="KW-0903">Direct protein sequencing</keyword>
<keyword id="KW-0372">Hormone</keyword>
<keyword id="KW-0964">Secreted</keyword>